<gene>
    <name evidence="1" type="primary">ureB</name>
    <name type="ordered locus">BRADO1038</name>
</gene>
<feature type="chain" id="PRO_1000070718" description="Urease subunit beta">
    <location>
        <begin position="1"/>
        <end position="101"/>
    </location>
</feature>
<dbReference type="EC" id="3.5.1.5" evidence="1"/>
<dbReference type="EMBL" id="CU234118">
    <property type="protein sequence ID" value="CAL74952.1"/>
    <property type="molecule type" value="Genomic_DNA"/>
</dbReference>
<dbReference type="RefSeq" id="WP_011924201.1">
    <property type="nucleotide sequence ID" value="NC_009445.1"/>
</dbReference>
<dbReference type="SMR" id="A4YM26"/>
<dbReference type="STRING" id="114615.BRADO1038"/>
<dbReference type="KEGG" id="bra:BRADO1038"/>
<dbReference type="eggNOG" id="COG0832">
    <property type="taxonomic scope" value="Bacteria"/>
</dbReference>
<dbReference type="HOGENOM" id="CLU_129707_1_1_5"/>
<dbReference type="OrthoDB" id="9797217at2"/>
<dbReference type="UniPathway" id="UPA00258">
    <property type="reaction ID" value="UER00370"/>
</dbReference>
<dbReference type="Proteomes" id="UP000001994">
    <property type="component" value="Chromosome"/>
</dbReference>
<dbReference type="GO" id="GO:0035550">
    <property type="term" value="C:urease complex"/>
    <property type="evidence" value="ECO:0007669"/>
    <property type="project" value="InterPro"/>
</dbReference>
<dbReference type="GO" id="GO:0009039">
    <property type="term" value="F:urease activity"/>
    <property type="evidence" value="ECO:0007669"/>
    <property type="project" value="UniProtKB-UniRule"/>
</dbReference>
<dbReference type="GO" id="GO:0043419">
    <property type="term" value="P:urea catabolic process"/>
    <property type="evidence" value="ECO:0007669"/>
    <property type="project" value="UniProtKB-UniRule"/>
</dbReference>
<dbReference type="CDD" id="cd00407">
    <property type="entry name" value="Urease_beta"/>
    <property type="match status" value="1"/>
</dbReference>
<dbReference type="FunFam" id="2.10.150.10:FF:000001">
    <property type="entry name" value="Urease subunit beta"/>
    <property type="match status" value="1"/>
</dbReference>
<dbReference type="Gene3D" id="2.10.150.10">
    <property type="entry name" value="Urease, beta subunit"/>
    <property type="match status" value="1"/>
</dbReference>
<dbReference type="HAMAP" id="MF_01954">
    <property type="entry name" value="Urease_beta"/>
    <property type="match status" value="1"/>
</dbReference>
<dbReference type="InterPro" id="IPR002019">
    <property type="entry name" value="Urease_beta-like"/>
</dbReference>
<dbReference type="InterPro" id="IPR036461">
    <property type="entry name" value="Urease_betasu_sf"/>
</dbReference>
<dbReference type="InterPro" id="IPR050069">
    <property type="entry name" value="Urease_subunit"/>
</dbReference>
<dbReference type="NCBIfam" id="NF009682">
    <property type="entry name" value="PRK13203.1"/>
    <property type="match status" value="1"/>
</dbReference>
<dbReference type="NCBIfam" id="TIGR00192">
    <property type="entry name" value="urease_beta"/>
    <property type="match status" value="1"/>
</dbReference>
<dbReference type="PANTHER" id="PTHR33569">
    <property type="entry name" value="UREASE"/>
    <property type="match status" value="1"/>
</dbReference>
<dbReference type="PANTHER" id="PTHR33569:SF1">
    <property type="entry name" value="UREASE"/>
    <property type="match status" value="1"/>
</dbReference>
<dbReference type="Pfam" id="PF00699">
    <property type="entry name" value="Urease_beta"/>
    <property type="match status" value="1"/>
</dbReference>
<dbReference type="SUPFAM" id="SSF51278">
    <property type="entry name" value="Urease, beta-subunit"/>
    <property type="match status" value="1"/>
</dbReference>
<name>URE2_BRASO</name>
<accession>A4YM26</accession>
<sequence>MIPGELFIQDGEIELNAGRKTVTISVANTGDRPIQVGSHYHFFETNPALKFDRKKARGMRLDIAAGTAVRFEPGQTRDVQLVALAGKRMVYGFRGDVMGKL</sequence>
<evidence type="ECO:0000255" key="1">
    <source>
        <dbReference type="HAMAP-Rule" id="MF_01954"/>
    </source>
</evidence>
<keyword id="KW-0963">Cytoplasm</keyword>
<keyword id="KW-0378">Hydrolase</keyword>
<keyword id="KW-1185">Reference proteome</keyword>
<comment type="catalytic activity">
    <reaction evidence="1">
        <text>urea + 2 H2O + H(+) = hydrogencarbonate + 2 NH4(+)</text>
        <dbReference type="Rhea" id="RHEA:20557"/>
        <dbReference type="ChEBI" id="CHEBI:15377"/>
        <dbReference type="ChEBI" id="CHEBI:15378"/>
        <dbReference type="ChEBI" id="CHEBI:16199"/>
        <dbReference type="ChEBI" id="CHEBI:17544"/>
        <dbReference type="ChEBI" id="CHEBI:28938"/>
        <dbReference type="EC" id="3.5.1.5"/>
    </reaction>
</comment>
<comment type="pathway">
    <text evidence="1">Nitrogen metabolism; urea degradation; CO(2) and NH(3) from urea (urease route): step 1/1.</text>
</comment>
<comment type="subunit">
    <text evidence="1">Heterotrimer of UreA (gamma), UreB (beta) and UreC (alpha) subunits. Three heterotrimers associate to form the active enzyme.</text>
</comment>
<comment type="subcellular location">
    <subcellularLocation>
        <location evidence="1">Cytoplasm</location>
    </subcellularLocation>
</comment>
<comment type="similarity">
    <text evidence="1">Belongs to the urease beta subunit family.</text>
</comment>
<organism>
    <name type="scientific">Bradyrhizobium sp. (strain ORS 278)</name>
    <dbReference type="NCBI Taxonomy" id="114615"/>
    <lineage>
        <taxon>Bacteria</taxon>
        <taxon>Pseudomonadati</taxon>
        <taxon>Pseudomonadota</taxon>
        <taxon>Alphaproteobacteria</taxon>
        <taxon>Hyphomicrobiales</taxon>
        <taxon>Nitrobacteraceae</taxon>
        <taxon>Bradyrhizobium</taxon>
    </lineage>
</organism>
<proteinExistence type="inferred from homology"/>
<protein>
    <recommendedName>
        <fullName evidence="1">Urease subunit beta</fullName>
        <ecNumber evidence="1">3.5.1.5</ecNumber>
    </recommendedName>
    <alternativeName>
        <fullName evidence="1">Urea amidohydrolase subunit beta</fullName>
    </alternativeName>
</protein>
<reference key="1">
    <citation type="journal article" date="2007" name="Science">
        <title>Legumes symbioses: absence of nod genes in photosynthetic bradyrhizobia.</title>
        <authorList>
            <person name="Giraud E."/>
            <person name="Moulin L."/>
            <person name="Vallenet D."/>
            <person name="Barbe V."/>
            <person name="Cytryn E."/>
            <person name="Avarre J.-C."/>
            <person name="Jaubert M."/>
            <person name="Simon D."/>
            <person name="Cartieaux F."/>
            <person name="Prin Y."/>
            <person name="Bena G."/>
            <person name="Hannibal L."/>
            <person name="Fardoux J."/>
            <person name="Kojadinovic M."/>
            <person name="Vuillet L."/>
            <person name="Lajus A."/>
            <person name="Cruveiller S."/>
            <person name="Rouy Z."/>
            <person name="Mangenot S."/>
            <person name="Segurens B."/>
            <person name="Dossat C."/>
            <person name="Franck W.L."/>
            <person name="Chang W.-S."/>
            <person name="Saunders E."/>
            <person name="Bruce D."/>
            <person name="Richardson P."/>
            <person name="Normand P."/>
            <person name="Dreyfus B."/>
            <person name="Pignol D."/>
            <person name="Stacey G."/>
            <person name="Emerich D."/>
            <person name="Vermeglio A."/>
            <person name="Medigue C."/>
            <person name="Sadowsky M."/>
        </authorList>
    </citation>
    <scope>NUCLEOTIDE SEQUENCE [LARGE SCALE GENOMIC DNA]</scope>
    <source>
        <strain>ORS 278</strain>
    </source>
</reference>